<reference key="1">
    <citation type="submission" date="2006-12" db="EMBL/GenBank/DDBJ databases">
        <title>Complete sequence of chromosome 1 of Acidovorax sp. JS42.</title>
        <authorList>
            <person name="Copeland A."/>
            <person name="Lucas S."/>
            <person name="Lapidus A."/>
            <person name="Barry K."/>
            <person name="Detter J.C."/>
            <person name="Glavina del Rio T."/>
            <person name="Dalin E."/>
            <person name="Tice H."/>
            <person name="Pitluck S."/>
            <person name="Chertkov O."/>
            <person name="Brettin T."/>
            <person name="Bruce D."/>
            <person name="Han C."/>
            <person name="Tapia R."/>
            <person name="Gilna P."/>
            <person name="Schmutz J."/>
            <person name="Larimer F."/>
            <person name="Land M."/>
            <person name="Hauser L."/>
            <person name="Kyrpides N."/>
            <person name="Kim E."/>
            <person name="Stahl D."/>
            <person name="Richardson P."/>
        </authorList>
    </citation>
    <scope>NUCLEOTIDE SEQUENCE [LARGE SCALE GENOMIC DNA]</scope>
    <source>
        <strain>JS42</strain>
    </source>
</reference>
<protein>
    <recommendedName>
        <fullName evidence="1">Chaperone protein DnaK</fullName>
    </recommendedName>
    <alternativeName>
        <fullName evidence="1">HSP70</fullName>
    </alternativeName>
    <alternativeName>
        <fullName evidence="1">Heat shock 70 kDa protein</fullName>
    </alternativeName>
    <alternativeName>
        <fullName evidence="1">Heat shock protein 70</fullName>
    </alternativeName>
</protein>
<keyword id="KW-0067">ATP-binding</keyword>
<keyword id="KW-0143">Chaperone</keyword>
<keyword id="KW-0547">Nucleotide-binding</keyword>
<keyword id="KW-0597">Phosphoprotein</keyword>
<keyword id="KW-0346">Stress response</keyword>
<proteinExistence type="inferred from homology"/>
<feature type="chain" id="PRO_1000059499" description="Chaperone protein DnaK">
    <location>
        <begin position="1"/>
        <end position="646"/>
    </location>
</feature>
<feature type="region of interest" description="Disordered" evidence="2">
    <location>
        <begin position="606"/>
        <end position="646"/>
    </location>
</feature>
<feature type="compositionally biased region" description="Low complexity" evidence="2">
    <location>
        <begin position="607"/>
        <end position="631"/>
    </location>
</feature>
<feature type="modified residue" description="Phosphothreonine; by autocatalysis" evidence="1">
    <location>
        <position position="200"/>
    </location>
</feature>
<sequence>MGKIIGIDLGTTNSCVAIMEGNNTRVIENSEGARTTPSIIAYQEDGEILVGASAKRQAVTNPKNTIYAAKRLIGRKFDEKEVQKDIDLMPFTITRADNGDAWVEVRGQKLAPPQISAEVLRKMKKTAEDFLGEPVTEAVITVPAYFNDAQRQATKDAGRIAGLDVKRIINEPTAAALAFGLDKQDKGDRKIAVYDLGGGTFDVSIIEIADVDGEKQFEVLSTNGDTFLGGEDFDQRIIDYIIGEFKKEQGVDLSKDVLALQRLKEAAEKAKIELSNSSQTDINLPYITADASGPKHLNIKLTRAKLESLVEDLIERTIAPCRTAIKDAGISVSDIDDVILVGGMTRMPKVQEKVKEFFGKEPRKDVNPDEAVAVGAAIQGQVLSGDRKDVLLLDVTPLSLGIETLGGVMTKMITKNTTIPTKFAQTFSTAEDNQPAVTIKVFQGEREIASANKLLGEFNLEGIPPASRGTPQIEVTFDIDANGILHVGAKDKGTGKENKITIKANSGLSEDEIQKMVKDAELNAADDKKKLELVQARNQGEAAVHTVTKSLSEHGDKLDAGEKEKIEAAVKDLEAALKTEDKAAIDEKTTALMAASQKLGEKMYGDAQAAQGAEAAGAQAAASGSAGAAAQDDNVVDAEVKEVKKG</sequence>
<dbReference type="EMBL" id="CP000539">
    <property type="protein sequence ID" value="ABM43341.1"/>
    <property type="molecule type" value="Genomic_DNA"/>
</dbReference>
<dbReference type="SMR" id="A1WAR6"/>
<dbReference type="STRING" id="232721.Ajs_3218"/>
<dbReference type="KEGG" id="ajs:Ajs_3218"/>
<dbReference type="eggNOG" id="COG0443">
    <property type="taxonomic scope" value="Bacteria"/>
</dbReference>
<dbReference type="HOGENOM" id="CLU_005965_2_1_4"/>
<dbReference type="Proteomes" id="UP000000645">
    <property type="component" value="Chromosome"/>
</dbReference>
<dbReference type="GO" id="GO:0005524">
    <property type="term" value="F:ATP binding"/>
    <property type="evidence" value="ECO:0007669"/>
    <property type="project" value="UniProtKB-UniRule"/>
</dbReference>
<dbReference type="GO" id="GO:0140662">
    <property type="term" value="F:ATP-dependent protein folding chaperone"/>
    <property type="evidence" value="ECO:0007669"/>
    <property type="project" value="InterPro"/>
</dbReference>
<dbReference type="GO" id="GO:0051082">
    <property type="term" value="F:unfolded protein binding"/>
    <property type="evidence" value="ECO:0007669"/>
    <property type="project" value="InterPro"/>
</dbReference>
<dbReference type="CDD" id="cd10234">
    <property type="entry name" value="ASKHA_NBD_HSP70_DnaK-like"/>
    <property type="match status" value="1"/>
</dbReference>
<dbReference type="FunFam" id="2.60.34.10:FF:000014">
    <property type="entry name" value="Chaperone protein DnaK HSP70"/>
    <property type="match status" value="1"/>
</dbReference>
<dbReference type="FunFam" id="1.20.1270.10:FF:000001">
    <property type="entry name" value="Molecular chaperone DnaK"/>
    <property type="match status" value="1"/>
</dbReference>
<dbReference type="FunFam" id="3.30.420.40:FF:000004">
    <property type="entry name" value="Molecular chaperone DnaK"/>
    <property type="match status" value="1"/>
</dbReference>
<dbReference type="FunFam" id="3.90.640.10:FF:000003">
    <property type="entry name" value="Molecular chaperone DnaK"/>
    <property type="match status" value="1"/>
</dbReference>
<dbReference type="Gene3D" id="1.20.1270.10">
    <property type="match status" value="1"/>
</dbReference>
<dbReference type="Gene3D" id="3.30.420.40">
    <property type="match status" value="2"/>
</dbReference>
<dbReference type="Gene3D" id="3.90.640.10">
    <property type="entry name" value="Actin, Chain A, domain 4"/>
    <property type="match status" value="1"/>
</dbReference>
<dbReference type="Gene3D" id="2.60.34.10">
    <property type="entry name" value="Substrate Binding Domain Of DNAk, Chain A, domain 1"/>
    <property type="match status" value="1"/>
</dbReference>
<dbReference type="HAMAP" id="MF_00332">
    <property type="entry name" value="DnaK"/>
    <property type="match status" value="1"/>
</dbReference>
<dbReference type="InterPro" id="IPR043129">
    <property type="entry name" value="ATPase_NBD"/>
</dbReference>
<dbReference type="InterPro" id="IPR012725">
    <property type="entry name" value="Chaperone_DnaK"/>
</dbReference>
<dbReference type="InterPro" id="IPR018181">
    <property type="entry name" value="Heat_shock_70_CS"/>
</dbReference>
<dbReference type="InterPro" id="IPR029048">
    <property type="entry name" value="HSP70_C_sf"/>
</dbReference>
<dbReference type="InterPro" id="IPR029047">
    <property type="entry name" value="HSP70_peptide-bd_sf"/>
</dbReference>
<dbReference type="InterPro" id="IPR013126">
    <property type="entry name" value="Hsp_70_fam"/>
</dbReference>
<dbReference type="NCBIfam" id="NF001413">
    <property type="entry name" value="PRK00290.1"/>
    <property type="match status" value="1"/>
</dbReference>
<dbReference type="NCBIfam" id="NF003520">
    <property type="entry name" value="PRK05183.1"/>
    <property type="match status" value="1"/>
</dbReference>
<dbReference type="NCBIfam" id="TIGR02350">
    <property type="entry name" value="prok_dnaK"/>
    <property type="match status" value="1"/>
</dbReference>
<dbReference type="PANTHER" id="PTHR19375">
    <property type="entry name" value="HEAT SHOCK PROTEIN 70KDA"/>
    <property type="match status" value="1"/>
</dbReference>
<dbReference type="Pfam" id="PF00012">
    <property type="entry name" value="HSP70"/>
    <property type="match status" value="1"/>
</dbReference>
<dbReference type="PRINTS" id="PR00301">
    <property type="entry name" value="HEATSHOCK70"/>
</dbReference>
<dbReference type="SUPFAM" id="SSF53067">
    <property type="entry name" value="Actin-like ATPase domain"/>
    <property type="match status" value="2"/>
</dbReference>
<dbReference type="SUPFAM" id="SSF100934">
    <property type="entry name" value="Heat shock protein 70kD (HSP70), C-terminal subdomain"/>
    <property type="match status" value="1"/>
</dbReference>
<dbReference type="SUPFAM" id="SSF100920">
    <property type="entry name" value="Heat shock protein 70kD (HSP70), peptide-binding domain"/>
    <property type="match status" value="1"/>
</dbReference>
<dbReference type="PROSITE" id="PS00297">
    <property type="entry name" value="HSP70_1"/>
    <property type="match status" value="1"/>
</dbReference>
<dbReference type="PROSITE" id="PS00329">
    <property type="entry name" value="HSP70_2"/>
    <property type="match status" value="1"/>
</dbReference>
<dbReference type="PROSITE" id="PS01036">
    <property type="entry name" value="HSP70_3"/>
    <property type="match status" value="1"/>
</dbReference>
<organism>
    <name type="scientific">Acidovorax sp. (strain JS42)</name>
    <dbReference type="NCBI Taxonomy" id="232721"/>
    <lineage>
        <taxon>Bacteria</taxon>
        <taxon>Pseudomonadati</taxon>
        <taxon>Pseudomonadota</taxon>
        <taxon>Betaproteobacteria</taxon>
        <taxon>Burkholderiales</taxon>
        <taxon>Comamonadaceae</taxon>
        <taxon>Acidovorax</taxon>
    </lineage>
</organism>
<gene>
    <name evidence="1" type="primary">dnaK</name>
    <name type="ordered locus">Ajs_3218</name>
</gene>
<name>DNAK_ACISJ</name>
<accession>A1WAR6</accession>
<comment type="function">
    <text evidence="1">Acts as a chaperone.</text>
</comment>
<comment type="induction">
    <text evidence="1">By stress conditions e.g. heat shock.</text>
</comment>
<comment type="similarity">
    <text evidence="1">Belongs to the heat shock protein 70 family.</text>
</comment>
<evidence type="ECO:0000255" key="1">
    <source>
        <dbReference type="HAMAP-Rule" id="MF_00332"/>
    </source>
</evidence>
<evidence type="ECO:0000256" key="2">
    <source>
        <dbReference type="SAM" id="MobiDB-lite"/>
    </source>
</evidence>